<accession>Q6QBQ4</accession>
<accession>Q4V7A3</accession>
<organism>
    <name type="scientific">Rattus norvegicus</name>
    <name type="common">Rat</name>
    <dbReference type="NCBI Taxonomy" id="10116"/>
    <lineage>
        <taxon>Eukaryota</taxon>
        <taxon>Metazoa</taxon>
        <taxon>Chordata</taxon>
        <taxon>Craniata</taxon>
        <taxon>Vertebrata</taxon>
        <taxon>Euteleostomi</taxon>
        <taxon>Mammalia</taxon>
        <taxon>Eutheria</taxon>
        <taxon>Euarchontoglires</taxon>
        <taxon>Glires</taxon>
        <taxon>Rodentia</taxon>
        <taxon>Myomorpha</taxon>
        <taxon>Muroidea</taxon>
        <taxon>Muridae</taxon>
        <taxon>Murinae</taxon>
        <taxon>Rattus</taxon>
    </lineage>
</organism>
<keyword id="KW-0053">Apoptosis</keyword>
<keyword id="KW-0106">Calcium</keyword>
<keyword id="KW-0445">Lipid transport</keyword>
<keyword id="KW-0449">Lipoprotein</keyword>
<keyword id="KW-0472">Membrane</keyword>
<keyword id="KW-0496">Mitochondrion</keyword>
<keyword id="KW-0999">Mitochondrion inner membrane</keyword>
<keyword id="KW-0539">Nucleus</keyword>
<keyword id="KW-0564">Palmitate</keyword>
<keyword id="KW-1185">Reference proteome</keyword>
<keyword id="KW-0677">Repeat</keyword>
<keyword id="KW-0729">SH3-binding</keyword>
<keyword id="KW-0812">Transmembrane</keyword>
<keyword id="KW-1133">Transmembrane helix</keyword>
<keyword id="KW-0813">Transport</keyword>
<dbReference type="EMBL" id="AY548831">
    <property type="protein sequence ID" value="AAS55061.1"/>
    <property type="molecule type" value="mRNA"/>
</dbReference>
<dbReference type="EMBL" id="BC098055">
    <property type="protein sequence ID" value="AAH98055.1"/>
    <property type="molecule type" value="mRNA"/>
</dbReference>
<dbReference type="RefSeq" id="NP_001012139.1">
    <property type="nucleotide sequence ID" value="NM_001012139.2"/>
</dbReference>
<dbReference type="RefSeq" id="XP_038942247.1">
    <property type="nucleotide sequence ID" value="XM_039086319.2"/>
</dbReference>
<dbReference type="FunCoup" id="Q6QBQ4">
    <property type="interactions" value="167"/>
</dbReference>
<dbReference type="STRING" id="10116.ENSRNOP00000035566"/>
<dbReference type="GlyGen" id="Q6QBQ4">
    <property type="glycosylation" value="1 site"/>
</dbReference>
<dbReference type="PhosphoSitePlus" id="Q6QBQ4"/>
<dbReference type="SwissPalm" id="Q6QBQ4"/>
<dbReference type="PaxDb" id="10116-ENSRNOP00000035566"/>
<dbReference type="GeneID" id="360549"/>
<dbReference type="KEGG" id="rno:360549"/>
<dbReference type="UCSC" id="RGD:1307016">
    <property type="organism name" value="rat"/>
</dbReference>
<dbReference type="AGR" id="RGD:1307016"/>
<dbReference type="CTD" id="57048"/>
<dbReference type="RGD" id="1307016">
    <property type="gene designation" value="Plscr3"/>
</dbReference>
<dbReference type="VEuPathDB" id="HostDB:ENSRNOG00000027914"/>
<dbReference type="eggNOG" id="KOG0621">
    <property type="taxonomic scope" value="Eukaryota"/>
</dbReference>
<dbReference type="HOGENOM" id="CLU_053024_1_0_1"/>
<dbReference type="InParanoid" id="Q6QBQ4"/>
<dbReference type="PhylomeDB" id="Q6QBQ4"/>
<dbReference type="TreeFam" id="TF314939"/>
<dbReference type="ChiTaRS" id="Plscr3">
    <property type="organism name" value="rat"/>
</dbReference>
<dbReference type="PRO" id="PR:Q6QBQ4"/>
<dbReference type="Proteomes" id="UP000002494">
    <property type="component" value="Chromosome 10"/>
</dbReference>
<dbReference type="Bgee" id="ENSRNOG00000027914">
    <property type="expression patterns" value="Expressed in lung and 19 other cell types or tissues"/>
</dbReference>
<dbReference type="GO" id="GO:0005829">
    <property type="term" value="C:cytosol"/>
    <property type="evidence" value="ECO:0000266"/>
    <property type="project" value="RGD"/>
</dbReference>
<dbReference type="GO" id="GO:0005743">
    <property type="term" value="C:mitochondrial inner membrane"/>
    <property type="evidence" value="ECO:0000314"/>
    <property type="project" value="UniProtKB"/>
</dbReference>
<dbReference type="GO" id="GO:0005739">
    <property type="term" value="C:mitochondrion"/>
    <property type="evidence" value="ECO:0000266"/>
    <property type="project" value="RGD"/>
</dbReference>
<dbReference type="GO" id="GO:0005634">
    <property type="term" value="C:nucleus"/>
    <property type="evidence" value="ECO:0000250"/>
    <property type="project" value="UniProtKB"/>
</dbReference>
<dbReference type="GO" id="GO:0005886">
    <property type="term" value="C:plasma membrane"/>
    <property type="evidence" value="ECO:0000266"/>
    <property type="project" value="RGD"/>
</dbReference>
<dbReference type="GO" id="GO:0005509">
    <property type="term" value="F:calcium ion binding"/>
    <property type="evidence" value="ECO:0000314"/>
    <property type="project" value="UniProtKB"/>
</dbReference>
<dbReference type="GO" id="GO:0048306">
    <property type="term" value="F:calcium-dependent protein binding"/>
    <property type="evidence" value="ECO:0000266"/>
    <property type="project" value="RGD"/>
</dbReference>
<dbReference type="GO" id="GO:0032791">
    <property type="term" value="F:lead ion binding"/>
    <property type="evidence" value="ECO:0000250"/>
    <property type="project" value="UniProtKB"/>
</dbReference>
<dbReference type="GO" id="GO:0000287">
    <property type="term" value="F:magnesium ion binding"/>
    <property type="evidence" value="ECO:0000250"/>
    <property type="project" value="UniProtKB"/>
</dbReference>
<dbReference type="GO" id="GO:0045340">
    <property type="term" value="F:mercury ion binding"/>
    <property type="evidence" value="ECO:0000250"/>
    <property type="project" value="UniProtKB"/>
</dbReference>
<dbReference type="GO" id="GO:0017128">
    <property type="term" value="F:phospholipid scramblase activity"/>
    <property type="evidence" value="ECO:0000314"/>
    <property type="project" value="UniProtKB"/>
</dbReference>
<dbReference type="GO" id="GO:0017124">
    <property type="term" value="F:SH3 domain binding"/>
    <property type="evidence" value="ECO:0007669"/>
    <property type="project" value="UniProtKB-KW"/>
</dbReference>
<dbReference type="GO" id="GO:0006915">
    <property type="term" value="P:apoptotic process"/>
    <property type="evidence" value="ECO:0000266"/>
    <property type="project" value="RGD"/>
</dbReference>
<dbReference type="GO" id="GO:0071222">
    <property type="term" value="P:cellular response to lipopolysaccharide"/>
    <property type="evidence" value="ECO:0000266"/>
    <property type="project" value="RGD"/>
</dbReference>
<dbReference type="GO" id="GO:0042632">
    <property type="term" value="P:cholesterol homeostasis"/>
    <property type="evidence" value="ECO:0000266"/>
    <property type="project" value="RGD"/>
</dbReference>
<dbReference type="GO" id="GO:0042593">
    <property type="term" value="P:glucose homeostasis"/>
    <property type="evidence" value="ECO:0000266"/>
    <property type="project" value="RGD"/>
</dbReference>
<dbReference type="GO" id="GO:0007006">
    <property type="term" value="P:mitochondrial membrane organization"/>
    <property type="evidence" value="ECO:0000250"/>
    <property type="project" value="UniProtKB"/>
</dbReference>
<dbReference type="GO" id="GO:0017121">
    <property type="term" value="P:plasma membrane phospholipid scrambling"/>
    <property type="evidence" value="ECO:0000318"/>
    <property type="project" value="GO_Central"/>
</dbReference>
<dbReference type="GO" id="GO:0042981">
    <property type="term" value="P:regulation of apoptotic process"/>
    <property type="evidence" value="ECO:0000250"/>
    <property type="project" value="UniProtKB"/>
</dbReference>
<dbReference type="GO" id="GO:0090199">
    <property type="term" value="P:regulation of release of cytochrome c from mitochondria"/>
    <property type="evidence" value="ECO:0000250"/>
    <property type="project" value="UniProtKB"/>
</dbReference>
<dbReference type="InterPro" id="IPR005552">
    <property type="entry name" value="Scramblase"/>
</dbReference>
<dbReference type="PANTHER" id="PTHR23248:SF37">
    <property type="entry name" value="PHOSPHOLIPID SCRAMBLASE 3"/>
    <property type="match status" value="1"/>
</dbReference>
<dbReference type="PANTHER" id="PTHR23248">
    <property type="entry name" value="PHOSPHOLIPID SCRAMBLASE-RELATED"/>
    <property type="match status" value="1"/>
</dbReference>
<dbReference type="Pfam" id="PF03803">
    <property type="entry name" value="Scramblase"/>
    <property type="match status" value="1"/>
</dbReference>
<reference key="1">
    <citation type="submission" date="2004-02" db="EMBL/GenBank/DDBJ databases">
        <title>Phospholipid scramblase 3 expression in pregnant rat myometrium.</title>
        <authorList>
            <person name="Chien E.K."/>
            <person name="Phillippe M."/>
            <person name="Ji H."/>
        </authorList>
    </citation>
    <scope>NUCLEOTIDE SEQUENCE [MRNA]</scope>
    <source>
        <strain>Sprague-Dawley</strain>
    </source>
</reference>
<reference key="2">
    <citation type="journal article" date="2004" name="Genome Res.">
        <title>The status, quality, and expansion of the NIH full-length cDNA project: the Mammalian Gene Collection (MGC).</title>
        <authorList>
            <consortium name="The MGC Project Team"/>
        </authorList>
    </citation>
    <scope>NUCLEOTIDE SEQUENCE [LARGE SCALE MRNA]</scope>
    <source>
        <tissue>Testis</tissue>
    </source>
</reference>
<reference key="3">
    <citation type="journal article" date="2017" name="FEBS Lett.">
        <title>Topological characterization of the mitochondrial phospholipid scramblase 3.</title>
        <authorList>
            <person name="Luevano-Martinez L.A."/>
            <person name="Kowaltowski A.J."/>
        </authorList>
    </citation>
    <scope>FUNCTION</scope>
    <scope>CATALYTIC ACTIVITY</scope>
    <scope>COFACTOR</scope>
    <scope>BIOPHYSICOCHEMICAL PROPERTIES</scope>
    <scope>SUBCELLULAR LOCATION</scope>
    <scope>TOPOLOGY</scope>
</reference>
<sequence>MAGYLPPKGYAPSPPPPYPVPAGYPEAAALHPGPGQAPVPTQGPAPAPGFSLFPSPGPVVPGPPGPFVPLPGVPSGLEFLVQIDQILIHQKAERVETFLGWETCNRYELRSGTGQQLGQAAEESNCCARLCCGARRPLRIRLADPGDREVLRLLRPLHCGCSCCPCGLQEMEVQAPPGTTIGHVLQTWHPFIPKFSILDADRQPVLRVVGPCCTCGCGTDTNFEVKTKDESRSVGRISKQWGGLLREALTDADDFGLQFPVDLDVRVKAVLLGATFLIDYMFFEKRGGAGPSAITS</sequence>
<gene>
    <name type="primary">Plscr3</name>
    <name type="synonym">Pls3</name>
</gene>
<proteinExistence type="evidence at protein level"/>
<feature type="chain" id="PRO_0000100791" description="Phospholipid scramblase 3">
    <location>
        <begin position="1"/>
        <end position="296"/>
    </location>
</feature>
<feature type="topological domain" description="Mitochondrial intermembrane" evidence="8">
    <location>
        <begin position="1"/>
        <end position="266"/>
    </location>
</feature>
<feature type="transmembrane region" description="Helical" evidence="4">
    <location>
        <begin position="267"/>
        <end position="283"/>
    </location>
</feature>
<feature type="region of interest" description="Disordered" evidence="5">
    <location>
        <begin position="1"/>
        <end position="58"/>
    </location>
</feature>
<feature type="region of interest" description="Proline-rich domain (PRD)" evidence="1">
    <location>
        <begin position="1"/>
        <end position="58"/>
    </location>
</feature>
<feature type="short sequence motif" description="SH3-binding 1" evidence="4">
    <location>
        <begin position="7"/>
        <end position="15"/>
    </location>
</feature>
<feature type="short sequence motif" description="PPxY motif" evidence="4">
    <location>
        <begin position="15"/>
        <end position="18"/>
    </location>
</feature>
<feature type="short sequence motif" description="SH3-binding 2" evidence="4">
    <location>
        <begin position="21"/>
        <end position="27"/>
    </location>
</feature>
<feature type="short sequence motif" description="SH3-binding 3" evidence="4">
    <location>
        <begin position="66"/>
        <end position="71"/>
    </location>
</feature>
<feature type="compositionally biased region" description="Low complexity" evidence="5">
    <location>
        <begin position="1"/>
        <end position="11"/>
    </location>
</feature>
<feature type="compositionally biased region" description="Pro residues" evidence="5">
    <location>
        <begin position="12"/>
        <end position="22"/>
    </location>
</feature>
<feature type="compositionally biased region" description="Pro residues" evidence="5">
    <location>
        <begin position="35"/>
        <end position="47"/>
    </location>
</feature>
<feature type="lipid moiety-binding region" description="S-palmitoyl cysteine" evidence="2">
    <location>
        <position position="159"/>
    </location>
</feature>
<feature type="lipid moiety-binding region" description="S-palmitoyl cysteine" evidence="2">
    <location>
        <position position="161"/>
    </location>
</feature>
<feature type="lipid moiety-binding region" description="S-palmitoyl cysteine" evidence="2">
    <location>
        <position position="163"/>
    </location>
</feature>
<feature type="lipid moiety-binding region" description="S-palmitoyl cysteine" evidence="2">
    <location>
        <position position="164"/>
    </location>
</feature>
<feature type="lipid moiety-binding region" description="S-palmitoyl cysteine" evidence="2">
    <location>
        <position position="166"/>
    </location>
</feature>
<protein>
    <recommendedName>
        <fullName>Phospholipid scramblase 3</fullName>
        <shortName>PL scramblase 3</shortName>
    </recommendedName>
    <alternativeName>
        <fullName>Ca(2+)-dependent phospholipid scramblase 3</fullName>
    </alternativeName>
</protein>
<comment type="function">
    <text evidence="3 6">Catalyzes calcium-induced ATP-independent rapid bidirectional and non-specific movement of the phospholipids (lipid scrambling or lipid flip-flop) between the inner and outer membrane of the mitochondria (PubMed:29171872). Plays an important role in mitochondrial respiratory function, morphology, and apoptotic response (By similarity). Mediates the translocation of cardiolipin from the mitochondrial inner membrane to outer membrane enhancing t-Bid induced cytochrome c release and apoptosis (By similarity). Enhances TNFSF10-induced apoptosis by regulating the distribution of cardiolipin in the mitochondrial membrane resulting in increased release of apoptogenic factors and consequent amplification of the activity of caspases (By similarity). Regulates cardiolipin de novo biosynthesis and its resynthesis (By similarity).</text>
</comment>
<comment type="catalytic activity">
    <reaction evidence="3">
        <text>a cardiolipin(in) = a cardiolipin(out)</text>
        <dbReference type="Rhea" id="RHEA:38695"/>
        <dbReference type="ChEBI" id="CHEBI:62237"/>
    </reaction>
    <physiologicalReaction direction="left-to-right" evidence="3">
        <dbReference type="Rhea" id="RHEA:38696"/>
    </physiologicalReaction>
</comment>
<comment type="catalytic activity">
    <reaction evidence="6">
        <text>a 1,2-diacyl-sn-glycero-3-phosphoethanolamine(in) = a 1,2-diacyl-sn-glycero-3-phosphoethanolamine(out)</text>
        <dbReference type="Rhea" id="RHEA:38895"/>
        <dbReference type="ChEBI" id="CHEBI:64612"/>
    </reaction>
    <physiologicalReaction direction="left-to-right" evidence="8">
        <dbReference type="Rhea" id="RHEA:38896"/>
    </physiologicalReaction>
</comment>
<comment type="catalytic activity">
    <reaction evidence="3">
        <text>a 1,2-diacyl-sn-glycero-3-phosphocholine(in) = a 1,2-diacyl-sn-glycero-3-phosphocholine(out)</text>
        <dbReference type="Rhea" id="RHEA:38571"/>
        <dbReference type="ChEBI" id="CHEBI:57643"/>
    </reaction>
    <physiologicalReaction direction="left-to-right" evidence="3">
        <dbReference type="Rhea" id="RHEA:38572"/>
    </physiologicalReaction>
    <physiologicalReaction direction="right-to-left" evidence="3">
        <dbReference type="Rhea" id="RHEA:38573"/>
    </physiologicalReaction>
</comment>
<comment type="catalytic activity">
    <reaction evidence="3">
        <text>a 1,2-diacyl-sn-glycero-3-phospho-L-serine(in) = a 1,2-diacyl-sn-glycero-3-phospho-L-serine(out)</text>
        <dbReference type="Rhea" id="RHEA:38663"/>
        <dbReference type="ChEBI" id="CHEBI:57262"/>
    </reaction>
    <physiologicalReaction direction="left-to-right" evidence="3">
        <dbReference type="Rhea" id="RHEA:38664"/>
    </physiologicalReaction>
</comment>
<comment type="catalytic activity">
    <reaction evidence="3">
        <text>a 1,2-diacyl-sn-glycero-3-phospho-(1'-sn-glycerol)(in) = a 1,2-diacyl-sn-glycero-3-phospho-(1'-sn-glycerol)(out)</text>
        <dbReference type="Rhea" id="RHEA:39743"/>
        <dbReference type="ChEBI" id="CHEBI:64716"/>
    </reaction>
    <physiologicalReaction direction="left-to-right" evidence="3">
        <dbReference type="Rhea" id="RHEA:39744"/>
    </physiologicalReaction>
</comment>
<comment type="cofactor">
    <cofactor evidence="6">
        <name>Ca(2+)</name>
        <dbReference type="ChEBI" id="CHEBI:29108"/>
    </cofactor>
    <cofactor evidence="3">
        <name>Mg(2+)</name>
        <dbReference type="ChEBI" id="CHEBI:18420"/>
    </cofactor>
</comment>
<comment type="biophysicochemical properties">
    <phDependence>
        <text evidence="6">Optimum pH is 5.8. Activity decreases at higher pH values.</text>
    </phDependence>
</comment>
<comment type="subunit">
    <text evidence="3">Monomer (By similarity). Forms homooligomers upon binding to Ca(2+), Pb(2+) and Hg(2+) ions (By similarity). Interacts with PDCD6 in a calcium-dependent manner (By similarity). Interacts with PRKCD; interaction is enhanced by UV irradiation (By similarity).</text>
</comment>
<comment type="subcellular location">
    <subcellularLocation>
        <location evidence="6">Mitochondrion inner membrane</location>
        <topology evidence="8">Single-pass type II membrane protein</topology>
    </subcellularLocation>
    <subcellularLocation>
        <location evidence="2">Nucleus</location>
    </subcellularLocation>
    <text evidence="2">Palmitoylation regulates its localization to the cell membrane or the nucleus; trafficking to the cell membrane is dependent upon palmitoylation whereas in the absence of palmitoylation, localizes to the nucleus.</text>
</comment>
<comment type="domain">
    <text evidence="1">The Proline-rich domain is required for phospholipid scramblase activity.</text>
</comment>
<comment type="PTM">
    <text evidence="2">Palmitoylation regulates its localization to the cell membrane or the nucleus; trafficking to the cell membrane is dependent upon palmitoylation whereas in the absence of palmitoylation, localizes to the nucleus.</text>
</comment>
<comment type="similarity">
    <text evidence="7">Belongs to the phospholipid scramblase family.</text>
</comment>
<name>PLS3_RAT</name>
<evidence type="ECO:0000250" key="1">
    <source>
        <dbReference type="UniProtKB" id="O15162"/>
    </source>
</evidence>
<evidence type="ECO:0000250" key="2">
    <source>
        <dbReference type="UniProtKB" id="Q9JIZ9"/>
    </source>
</evidence>
<evidence type="ECO:0000250" key="3">
    <source>
        <dbReference type="UniProtKB" id="Q9NRY6"/>
    </source>
</evidence>
<evidence type="ECO:0000255" key="4"/>
<evidence type="ECO:0000256" key="5">
    <source>
        <dbReference type="SAM" id="MobiDB-lite"/>
    </source>
</evidence>
<evidence type="ECO:0000269" key="6">
    <source>
    </source>
</evidence>
<evidence type="ECO:0000305" key="7"/>
<evidence type="ECO:0000305" key="8">
    <source>
    </source>
</evidence>